<accession>Q88AD1</accession>
<protein>
    <recommendedName>
        <fullName evidence="1">Serine hydroxymethyltransferase 1</fullName>
        <shortName evidence="1">SHMT 1</shortName>
        <shortName evidence="1">Serine methylase 1</shortName>
        <ecNumber evidence="1">2.1.2.1</ecNumber>
    </recommendedName>
</protein>
<feature type="chain" id="PRO_0000113642" description="Serine hydroxymethyltransferase 1">
    <location>
        <begin position="1"/>
        <end position="417"/>
    </location>
</feature>
<feature type="binding site" evidence="1">
    <location>
        <position position="121"/>
    </location>
    <ligand>
        <name>(6S)-5,6,7,8-tetrahydrofolate</name>
        <dbReference type="ChEBI" id="CHEBI:57453"/>
    </ligand>
</feature>
<feature type="binding site" evidence="1">
    <location>
        <begin position="125"/>
        <end position="127"/>
    </location>
    <ligand>
        <name>(6S)-5,6,7,8-tetrahydrofolate</name>
        <dbReference type="ChEBI" id="CHEBI:57453"/>
    </ligand>
</feature>
<feature type="binding site" evidence="1">
    <location>
        <begin position="355"/>
        <end position="357"/>
    </location>
    <ligand>
        <name>(6S)-5,6,7,8-tetrahydrofolate</name>
        <dbReference type="ChEBI" id="CHEBI:57453"/>
    </ligand>
</feature>
<feature type="site" description="Plays an important role in substrate specificity" evidence="1">
    <location>
        <position position="229"/>
    </location>
</feature>
<feature type="modified residue" description="N6-(pyridoxal phosphate)lysine" evidence="1">
    <location>
        <position position="230"/>
    </location>
</feature>
<name>GLYA1_PSESM</name>
<proteinExistence type="inferred from homology"/>
<organism>
    <name type="scientific">Pseudomonas syringae pv. tomato (strain ATCC BAA-871 / DC3000)</name>
    <dbReference type="NCBI Taxonomy" id="223283"/>
    <lineage>
        <taxon>Bacteria</taxon>
        <taxon>Pseudomonadati</taxon>
        <taxon>Pseudomonadota</taxon>
        <taxon>Gammaproteobacteria</taxon>
        <taxon>Pseudomonadales</taxon>
        <taxon>Pseudomonadaceae</taxon>
        <taxon>Pseudomonas</taxon>
    </lineage>
</organism>
<dbReference type="EC" id="2.1.2.1" evidence="1"/>
<dbReference type="EMBL" id="AE016853">
    <property type="protein sequence ID" value="AAO54005.1"/>
    <property type="molecule type" value="Genomic_DNA"/>
</dbReference>
<dbReference type="RefSeq" id="NP_790310.1">
    <property type="nucleotide sequence ID" value="NC_004578.1"/>
</dbReference>
<dbReference type="SMR" id="Q88AD1"/>
<dbReference type="STRING" id="223283.PSPTO_0461"/>
<dbReference type="GeneID" id="1182070"/>
<dbReference type="KEGG" id="pst:PSPTO_0461"/>
<dbReference type="PATRIC" id="fig|223283.9.peg.480"/>
<dbReference type="eggNOG" id="COG0112">
    <property type="taxonomic scope" value="Bacteria"/>
</dbReference>
<dbReference type="HOGENOM" id="CLU_022477_2_1_6"/>
<dbReference type="OrthoDB" id="9803846at2"/>
<dbReference type="PhylomeDB" id="Q88AD1"/>
<dbReference type="UniPathway" id="UPA00193"/>
<dbReference type="UniPathway" id="UPA00288">
    <property type="reaction ID" value="UER01023"/>
</dbReference>
<dbReference type="Proteomes" id="UP000002515">
    <property type="component" value="Chromosome"/>
</dbReference>
<dbReference type="GO" id="GO:0005829">
    <property type="term" value="C:cytosol"/>
    <property type="evidence" value="ECO:0007669"/>
    <property type="project" value="TreeGrafter"/>
</dbReference>
<dbReference type="GO" id="GO:0004372">
    <property type="term" value="F:glycine hydroxymethyltransferase activity"/>
    <property type="evidence" value="ECO:0007669"/>
    <property type="project" value="UniProtKB-UniRule"/>
</dbReference>
<dbReference type="GO" id="GO:0030170">
    <property type="term" value="F:pyridoxal phosphate binding"/>
    <property type="evidence" value="ECO:0007669"/>
    <property type="project" value="UniProtKB-UniRule"/>
</dbReference>
<dbReference type="GO" id="GO:0019264">
    <property type="term" value="P:glycine biosynthetic process from serine"/>
    <property type="evidence" value="ECO:0007669"/>
    <property type="project" value="UniProtKB-UniRule"/>
</dbReference>
<dbReference type="GO" id="GO:0035999">
    <property type="term" value="P:tetrahydrofolate interconversion"/>
    <property type="evidence" value="ECO:0007669"/>
    <property type="project" value="UniProtKB-UniRule"/>
</dbReference>
<dbReference type="CDD" id="cd00378">
    <property type="entry name" value="SHMT"/>
    <property type="match status" value="1"/>
</dbReference>
<dbReference type="FunFam" id="3.40.640.10:FF:000001">
    <property type="entry name" value="Serine hydroxymethyltransferase"/>
    <property type="match status" value="1"/>
</dbReference>
<dbReference type="FunFam" id="3.90.1150.10:FF:000003">
    <property type="entry name" value="Serine hydroxymethyltransferase"/>
    <property type="match status" value="1"/>
</dbReference>
<dbReference type="Gene3D" id="3.90.1150.10">
    <property type="entry name" value="Aspartate Aminotransferase, domain 1"/>
    <property type="match status" value="1"/>
</dbReference>
<dbReference type="Gene3D" id="3.40.640.10">
    <property type="entry name" value="Type I PLP-dependent aspartate aminotransferase-like (Major domain)"/>
    <property type="match status" value="1"/>
</dbReference>
<dbReference type="HAMAP" id="MF_00051">
    <property type="entry name" value="SHMT"/>
    <property type="match status" value="1"/>
</dbReference>
<dbReference type="InterPro" id="IPR015424">
    <property type="entry name" value="PyrdxlP-dep_Trfase"/>
</dbReference>
<dbReference type="InterPro" id="IPR015421">
    <property type="entry name" value="PyrdxlP-dep_Trfase_major"/>
</dbReference>
<dbReference type="InterPro" id="IPR015422">
    <property type="entry name" value="PyrdxlP-dep_Trfase_small"/>
</dbReference>
<dbReference type="InterPro" id="IPR001085">
    <property type="entry name" value="Ser_HO-MeTrfase"/>
</dbReference>
<dbReference type="InterPro" id="IPR049943">
    <property type="entry name" value="Ser_HO-MeTrfase-like"/>
</dbReference>
<dbReference type="InterPro" id="IPR019798">
    <property type="entry name" value="Ser_HO-MeTrfase_PLP_BS"/>
</dbReference>
<dbReference type="InterPro" id="IPR039429">
    <property type="entry name" value="SHMT-like_dom"/>
</dbReference>
<dbReference type="NCBIfam" id="NF000586">
    <property type="entry name" value="PRK00011.1"/>
    <property type="match status" value="1"/>
</dbReference>
<dbReference type="PANTHER" id="PTHR11680">
    <property type="entry name" value="SERINE HYDROXYMETHYLTRANSFERASE"/>
    <property type="match status" value="1"/>
</dbReference>
<dbReference type="PANTHER" id="PTHR11680:SF50">
    <property type="entry name" value="SERINE HYDROXYMETHYLTRANSFERASE"/>
    <property type="match status" value="1"/>
</dbReference>
<dbReference type="Pfam" id="PF00464">
    <property type="entry name" value="SHMT"/>
    <property type="match status" value="1"/>
</dbReference>
<dbReference type="PIRSF" id="PIRSF000412">
    <property type="entry name" value="SHMT"/>
    <property type="match status" value="1"/>
</dbReference>
<dbReference type="SUPFAM" id="SSF53383">
    <property type="entry name" value="PLP-dependent transferases"/>
    <property type="match status" value="1"/>
</dbReference>
<dbReference type="PROSITE" id="PS00096">
    <property type="entry name" value="SHMT"/>
    <property type="match status" value="1"/>
</dbReference>
<reference key="1">
    <citation type="journal article" date="2003" name="Proc. Natl. Acad. Sci. U.S.A.">
        <title>The complete genome sequence of the Arabidopsis and tomato pathogen Pseudomonas syringae pv. tomato DC3000.</title>
        <authorList>
            <person name="Buell C.R."/>
            <person name="Joardar V."/>
            <person name="Lindeberg M."/>
            <person name="Selengut J."/>
            <person name="Paulsen I.T."/>
            <person name="Gwinn M.L."/>
            <person name="Dodson R.J."/>
            <person name="DeBoy R.T."/>
            <person name="Durkin A.S."/>
            <person name="Kolonay J.F."/>
            <person name="Madupu R."/>
            <person name="Daugherty S.C."/>
            <person name="Brinkac L.M."/>
            <person name="Beanan M.J."/>
            <person name="Haft D.H."/>
            <person name="Nelson W.C."/>
            <person name="Davidsen T.M."/>
            <person name="Zafar N."/>
            <person name="Zhou L."/>
            <person name="Liu J."/>
            <person name="Yuan Q."/>
            <person name="Khouri H.M."/>
            <person name="Fedorova N.B."/>
            <person name="Tran B."/>
            <person name="Russell D."/>
            <person name="Berry K.J."/>
            <person name="Utterback T.R."/>
            <person name="Van Aken S.E."/>
            <person name="Feldblyum T.V."/>
            <person name="D'Ascenzo M."/>
            <person name="Deng W.-L."/>
            <person name="Ramos A.R."/>
            <person name="Alfano J.R."/>
            <person name="Cartinhour S."/>
            <person name="Chatterjee A.K."/>
            <person name="Delaney T.P."/>
            <person name="Lazarowitz S.G."/>
            <person name="Martin G.B."/>
            <person name="Schneider D.J."/>
            <person name="Tang X."/>
            <person name="Bender C.L."/>
            <person name="White O."/>
            <person name="Fraser C.M."/>
            <person name="Collmer A."/>
        </authorList>
    </citation>
    <scope>NUCLEOTIDE SEQUENCE [LARGE SCALE GENOMIC DNA]</scope>
    <source>
        <strain>ATCC BAA-871 / DC3000</strain>
    </source>
</reference>
<sequence length="417" mass="44875">MFSKQDQIQGYDDALLSAMNAEEQRQEDHIELIASENYTSKRVMQAQGSGLTNKYAEGYPGKRYYGGCEHVDKVEQLAIERARQLFGADYANVQPHSGSQANAAVYLALLQAGDTVLGMSLAHGGHLTHGAKVSFSGKLYNAVQYGIDTTTGLIDYDEVERIAVECQPKMLIAGFSAYSKTLDFPRFRAIADKVGAYLFVDMAHVAGLVAAGLYPNPLPYADVVTTTTHKTLRGPRGGLILAKANEELEKKFNSAVFPGGQGGPLMHVIAAKAVCFKEAMEPGFKTYQQQVIDNAQAMAQVFITRGFDVVSGGTDNHLFLVSLIRQGLTGKEADAALGRAHITVNKNSVPNDPQSPFVTSGLRIGTPAVTTRGFKVTQCIELAGWICDILDNLGAADVEANVASQVAALCADFPVYR</sequence>
<gene>
    <name evidence="1" type="primary">glyA1</name>
    <name type="synonym">glyA-1</name>
    <name type="ordered locus">PSPTO_0461</name>
</gene>
<evidence type="ECO:0000255" key="1">
    <source>
        <dbReference type="HAMAP-Rule" id="MF_00051"/>
    </source>
</evidence>
<keyword id="KW-0028">Amino-acid biosynthesis</keyword>
<keyword id="KW-0963">Cytoplasm</keyword>
<keyword id="KW-0554">One-carbon metabolism</keyword>
<keyword id="KW-0663">Pyridoxal phosphate</keyword>
<keyword id="KW-1185">Reference proteome</keyword>
<keyword id="KW-0808">Transferase</keyword>
<comment type="function">
    <text evidence="1">Catalyzes the reversible interconversion of serine and glycine with tetrahydrofolate (THF) serving as the one-carbon carrier. This reaction serves as the major source of one-carbon groups required for the biosynthesis of purines, thymidylate, methionine, and other important biomolecules. Also exhibits THF-independent aldolase activity toward beta-hydroxyamino acids, producing glycine and aldehydes, via a retro-aldol mechanism.</text>
</comment>
<comment type="catalytic activity">
    <reaction evidence="1">
        <text>(6R)-5,10-methylene-5,6,7,8-tetrahydrofolate + glycine + H2O = (6S)-5,6,7,8-tetrahydrofolate + L-serine</text>
        <dbReference type="Rhea" id="RHEA:15481"/>
        <dbReference type="ChEBI" id="CHEBI:15377"/>
        <dbReference type="ChEBI" id="CHEBI:15636"/>
        <dbReference type="ChEBI" id="CHEBI:33384"/>
        <dbReference type="ChEBI" id="CHEBI:57305"/>
        <dbReference type="ChEBI" id="CHEBI:57453"/>
        <dbReference type="EC" id="2.1.2.1"/>
    </reaction>
</comment>
<comment type="cofactor">
    <cofactor evidence="1">
        <name>pyridoxal 5'-phosphate</name>
        <dbReference type="ChEBI" id="CHEBI:597326"/>
    </cofactor>
</comment>
<comment type="pathway">
    <text evidence="1">One-carbon metabolism; tetrahydrofolate interconversion.</text>
</comment>
<comment type="pathway">
    <text evidence="1">Amino-acid biosynthesis; glycine biosynthesis; glycine from L-serine: step 1/1.</text>
</comment>
<comment type="subunit">
    <text evidence="1">Homodimer.</text>
</comment>
<comment type="subcellular location">
    <subcellularLocation>
        <location evidence="1">Cytoplasm</location>
    </subcellularLocation>
</comment>
<comment type="similarity">
    <text evidence="1">Belongs to the SHMT family.</text>
</comment>